<keyword id="KW-0004">4Fe-4S</keyword>
<keyword id="KW-0963">Cytoplasm</keyword>
<keyword id="KW-0408">Iron</keyword>
<keyword id="KW-0411">Iron-sulfur</keyword>
<keyword id="KW-0479">Metal-binding</keyword>
<keyword id="KW-0949">S-adenosyl-L-methionine</keyword>
<keyword id="KW-0808">Transferase</keyword>
<keyword id="KW-0819">tRNA processing</keyword>
<proteinExistence type="inferred from homology"/>
<evidence type="ECO:0000255" key="1">
    <source>
        <dbReference type="HAMAP-Rule" id="MF_01864"/>
    </source>
</evidence>
<evidence type="ECO:0000255" key="2">
    <source>
        <dbReference type="PROSITE-ProRule" id="PRU01266"/>
    </source>
</evidence>
<gene>
    <name evidence="1" type="primary">miaB</name>
    <name type="ordered locus">CMM_2023</name>
</gene>
<reference key="1">
    <citation type="journal article" date="2008" name="J. Bacteriol.">
        <title>The genome sequence of the tomato-pathogenic actinomycete Clavibacter michiganensis subsp. michiganensis NCPPB382 reveals a large island involved in pathogenicity.</title>
        <authorList>
            <person name="Gartemann K.-H."/>
            <person name="Abt B."/>
            <person name="Bekel T."/>
            <person name="Burger A."/>
            <person name="Engemann J."/>
            <person name="Fluegel M."/>
            <person name="Gaigalat L."/>
            <person name="Goesmann A."/>
            <person name="Graefen I."/>
            <person name="Kalinowski J."/>
            <person name="Kaup O."/>
            <person name="Kirchner O."/>
            <person name="Krause L."/>
            <person name="Linke B."/>
            <person name="McHardy A."/>
            <person name="Meyer F."/>
            <person name="Pohle S."/>
            <person name="Rueckert C."/>
            <person name="Schneiker S."/>
            <person name="Zellermann E.-M."/>
            <person name="Puehler A."/>
            <person name="Eichenlaub R."/>
            <person name="Kaiser O."/>
            <person name="Bartels D."/>
        </authorList>
    </citation>
    <scope>NUCLEOTIDE SEQUENCE [LARGE SCALE GENOMIC DNA]</scope>
    <source>
        <strain>NCPPB 382</strain>
    </source>
</reference>
<feature type="chain" id="PRO_0000374217" description="tRNA-2-methylthio-N(6)-dimethylallyladenosine synthase">
    <location>
        <begin position="1"/>
        <end position="528"/>
    </location>
</feature>
<feature type="domain" description="MTTase N-terminal" evidence="1">
    <location>
        <begin position="19"/>
        <end position="134"/>
    </location>
</feature>
<feature type="domain" description="Radical SAM core" evidence="2">
    <location>
        <begin position="157"/>
        <end position="387"/>
    </location>
</feature>
<feature type="domain" description="TRAM" evidence="1">
    <location>
        <begin position="390"/>
        <end position="460"/>
    </location>
</feature>
<feature type="binding site" evidence="1">
    <location>
        <position position="28"/>
    </location>
    <ligand>
        <name>[4Fe-4S] cluster</name>
        <dbReference type="ChEBI" id="CHEBI:49883"/>
        <label>1</label>
    </ligand>
</feature>
<feature type="binding site" evidence="1">
    <location>
        <position position="63"/>
    </location>
    <ligand>
        <name>[4Fe-4S] cluster</name>
        <dbReference type="ChEBI" id="CHEBI:49883"/>
        <label>1</label>
    </ligand>
</feature>
<feature type="binding site" evidence="1">
    <location>
        <position position="97"/>
    </location>
    <ligand>
        <name>[4Fe-4S] cluster</name>
        <dbReference type="ChEBI" id="CHEBI:49883"/>
        <label>1</label>
    </ligand>
</feature>
<feature type="binding site" evidence="1">
    <location>
        <position position="171"/>
    </location>
    <ligand>
        <name>[4Fe-4S] cluster</name>
        <dbReference type="ChEBI" id="CHEBI:49883"/>
        <label>2</label>
        <note>4Fe-4S-S-AdoMet</note>
    </ligand>
</feature>
<feature type="binding site" evidence="1">
    <location>
        <position position="175"/>
    </location>
    <ligand>
        <name>[4Fe-4S] cluster</name>
        <dbReference type="ChEBI" id="CHEBI:49883"/>
        <label>2</label>
        <note>4Fe-4S-S-AdoMet</note>
    </ligand>
</feature>
<feature type="binding site" evidence="1">
    <location>
        <position position="178"/>
    </location>
    <ligand>
        <name>[4Fe-4S] cluster</name>
        <dbReference type="ChEBI" id="CHEBI:49883"/>
        <label>2</label>
        <note>4Fe-4S-S-AdoMet</note>
    </ligand>
</feature>
<name>MIAB_CLAM3</name>
<comment type="function">
    <text evidence="1">Catalyzes the methylthiolation of N6-(dimethylallyl)adenosine (i(6)A), leading to the formation of 2-methylthio-N6-(dimethylallyl)adenosine (ms(2)i(6)A) at position 37 in tRNAs that read codons beginning with uridine.</text>
</comment>
<comment type="catalytic activity">
    <reaction evidence="1">
        <text>N(6)-dimethylallyladenosine(37) in tRNA + (sulfur carrier)-SH + AH2 + 2 S-adenosyl-L-methionine = 2-methylsulfanyl-N(6)-dimethylallyladenosine(37) in tRNA + (sulfur carrier)-H + 5'-deoxyadenosine + L-methionine + A + S-adenosyl-L-homocysteine + 2 H(+)</text>
        <dbReference type="Rhea" id="RHEA:37067"/>
        <dbReference type="Rhea" id="RHEA-COMP:10375"/>
        <dbReference type="Rhea" id="RHEA-COMP:10376"/>
        <dbReference type="Rhea" id="RHEA-COMP:14737"/>
        <dbReference type="Rhea" id="RHEA-COMP:14739"/>
        <dbReference type="ChEBI" id="CHEBI:13193"/>
        <dbReference type="ChEBI" id="CHEBI:15378"/>
        <dbReference type="ChEBI" id="CHEBI:17319"/>
        <dbReference type="ChEBI" id="CHEBI:17499"/>
        <dbReference type="ChEBI" id="CHEBI:29917"/>
        <dbReference type="ChEBI" id="CHEBI:57844"/>
        <dbReference type="ChEBI" id="CHEBI:57856"/>
        <dbReference type="ChEBI" id="CHEBI:59789"/>
        <dbReference type="ChEBI" id="CHEBI:64428"/>
        <dbReference type="ChEBI" id="CHEBI:74415"/>
        <dbReference type="ChEBI" id="CHEBI:74417"/>
        <dbReference type="EC" id="2.8.4.3"/>
    </reaction>
</comment>
<comment type="cofactor">
    <cofactor evidence="1">
        <name>[4Fe-4S] cluster</name>
        <dbReference type="ChEBI" id="CHEBI:49883"/>
    </cofactor>
    <text evidence="1">Binds 2 [4Fe-4S] clusters. One cluster is coordinated with 3 cysteines and an exchangeable S-adenosyl-L-methionine.</text>
</comment>
<comment type="subunit">
    <text evidence="1">Monomer.</text>
</comment>
<comment type="subcellular location">
    <subcellularLocation>
        <location evidence="1">Cytoplasm</location>
    </subcellularLocation>
</comment>
<comment type="similarity">
    <text evidence="1">Belongs to the methylthiotransferase family. MiaB subfamily.</text>
</comment>
<accession>A5CSL5</accession>
<sequence length="528" mass="57076">MSTLAEHVRDTPPAAERPRTYEVRTYGCQMNVHDSERLTGSLEAAGYVSAEGAEADIVVINTCAVRENADNKLYGNLGHLAGVKRRHEGMQIAVGGCLAQKDRATVLEKAPWVDVVFGTHNMGALPTLLERARHNGEAQLEILESLETFPSTLPTKRDEIASGWVSISVGCNNTCTFCIVPALRGKEKDRRPGDILAEIQALVDDGAVEVTLLGQNVNSYGVEFGDRQAFGKLLRAAGAIEGLERIRFTSPHPAAFTDDVIDAMAETPAVMPQLHMPLQSGSDRVLKAMRRSYRSERFLGILDRVRTRIPDAAITTDIIVGFPGETEEDFQETLRVVEAARFSSAFTFQYSIRPGTPAATMEEQVPADVVKERYGRLTALQERISHEENQRVVGRTVEVLVSAHEGRKDGDTRRVTGRAQDGRLVHLDVPAGSGEPRPGDAVEVEITRAAPFHLIADSVDQAPLRIRRTRAGDAWERAQADSCGVPAPAAGTSAGGPPRVSLGLPSLRASTIASAGAVDGSAHPRHRA</sequence>
<protein>
    <recommendedName>
        <fullName evidence="1">tRNA-2-methylthio-N(6)-dimethylallyladenosine synthase</fullName>
        <ecNumber evidence="1">2.8.4.3</ecNumber>
    </recommendedName>
    <alternativeName>
        <fullName evidence="1">(Dimethylallyl)adenosine tRNA methylthiotransferase MiaB</fullName>
    </alternativeName>
    <alternativeName>
        <fullName evidence="1">tRNA-i(6)A37 methylthiotransferase</fullName>
    </alternativeName>
</protein>
<organism>
    <name type="scientific">Clavibacter michiganensis subsp. michiganensis (strain NCPPB 382)</name>
    <dbReference type="NCBI Taxonomy" id="443906"/>
    <lineage>
        <taxon>Bacteria</taxon>
        <taxon>Bacillati</taxon>
        <taxon>Actinomycetota</taxon>
        <taxon>Actinomycetes</taxon>
        <taxon>Micrococcales</taxon>
        <taxon>Microbacteriaceae</taxon>
        <taxon>Clavibacter</taxon>
    </lineage>
</organism>
<dbReference type="EC" id="2.8.4.3" evidence="1"/>
<dbReference type="EMBL" id="AM711867">
    <property type="protein sequence ID" value="CAN02086.1"/>
    <property type="molecule type" value="Genomic_DNA"/>
</dbReference>
<dbReference type="RefSeq" id="WP_012038710.1">
    <property type="nucleotide sequence ID" value="NC_009480.1"/>
</dbReference>
<dbReference type="SMR" id="A5CSL5"/>
<dbReference type="KEGG" id="cmi:CMM_2023"/>
<dbReference type="eggNOG" id="COG0621">
    <property type="taxonomic scope" value="Bacteria"/>
</dbReference>
<dbReference type="HOGENOM" id="CLU_018697_2_2_11"/>
<dbReference type="OrthoDB" id="9805215at2"/>
<dbReference type="Proteomes" id="UP000001564">
    <property type="component" value="Chromosome"/>
</dbReference>
<dbReference type="GO" id="GO:0005829">
    <property type="term" value="C:cytosol"/>
    <property type="evidence" value="ECO:0007669"/>
    <property type="project" value="TreeGrafter"/>
</dbReference>
<dbReference type="GO" id="GO:0051539">
    <property type="term" value="F:4 iron, 4 sulfur cluster binding"/>
    <property type="evidence" value="ECO:0007669"/>
    <property type="project" value="UniProtKB-UniRule"/>
</dbReference>
<dbReference type="GO" id="GO:0046872">
    <property type="term" value="F:metal ion binding"/>
    <property type="evidence" value="ECO:0007669"/>
    <property type="project" value="UniProtKB-KW"/>
</dbReference>
<dbReference type="GO" id="GO:0035597">
    <property type="term" value="F:N6-isopentenyladenosine methylthiotransferase activity"/>
    <property type="evidence" value="ECO:0007669"/>
    <property type="project" value="TreeGrafter"/>
</dbReference>
<dbReference type="CDD" id="cd01335">
    <property type="entry name" value="Radical_SAM"/>
    <property type="match status" value="1"/>
</dbReference>
<dbReference type="FunFam" id="3.40.50.12160:FF:000003">
    <property type="entry name" value="CDK5 regulatory subunit-associated protein 1"/>
    <property type="match status" value="1"/>
</dbReference>
<dbReference type="FunFam" id="3.80.30.20:FF:000001">
    <property type="entry name" value="tRNA-2-methylthio-N(6)-dimethylallyladenosine synthase 2"/>
    <property type="match status" value="1"/>
</dbReference>
<dbReference type="Gene3D" id="3.40.50.12160">
    <property type="entry name" value="Methylthiotransferase, N-terminal domain"/>
    <property type="match status" value="1"/>
</dbReference>
<dbReference type="Gene3D" id="3.80.30.20">
    <property type="entry name" value="tm_1862 like domain"/>
    <property type="match status" value="1"/>
</dbReference>
<dbReference type="HAMAP" id="MF_01864">
    <property type="entry name" value="tRNA_metthiotr_MiaB"/>
    <property type="match status" value="1"/>
</dbReference>
<dbReference type="InterPro" id="IPR006638">
    <property type="entry name" value="Elp3/MiaA/NifB-like_rSAM"/>
</dbReference>
<dbReference type="InterPro" id="IPR005839">
    <property type="entry name" value="Methylthiotransferase"/>
</dbReference>
<dbReference type="InterPro" id="IPR020612">
    <property type="entry name" value="Methylthiotransferase_CS"/>
</dbReference>
<dbReference type="InterPro" id="IPR013848">
    <property type="entry name" value="Methylthiotransferase_N"/>
</dbReference>
<dbReference type="InterPro" id="IPR038135">
    <property type="entry name" value="Methylthiotransferase_N_sf"/>
</dbReference>
<dbReference type="InterPro" id="IPR006463">
    <property type="entry name" value="MiaB_methiolase"/>
</dbReference>
<dbReference type="InterPro" id="IPR007197">
    <property type="entry name" value="rSAM"/>
</dbReference>
<dbReference type="InterPro" id="IPR023404">
    <property type="entry name" value="rSAM_horseshoe"/>
</dbReference>
<dbReference type="InterPro" id="IPR002792">
    <property type="entry name" value="TRAM_dom"/>
</dbReference>
<dbReference type="NCBIfam" id="TIGR01574">
    <property type="entry name" value="miaB-methiolase"/>
    <property type="match status" value="1"/>
</dbReference>
<dbReference type="NCBIfam" id="TIGR00089">
    <property type="entry name" value="MiaB/RimO family radical SAM methylthiotransferase"/>
    <property type="match status" value="1"/>
</dbReference>
<dbReference type="PANTHER" id="PTHR43020">
    <property type="entry name" value="CDK5 REGULATORY SUBUNIT-ASSOCIATED PROTEIN 1"/>
    <property type="match status" value="1"/>
</dbReference>
<dbReference type="PANTHER" id="PTHR43020:SF2">
    <property type="entry name" value="MITOCHONDRIAL TRNA METHYLTHIOTRANSFERASE CDK5RAP1"/>
    <property type="match status" value="1"/>
</dbReference>
<dbReference type="Pfam" id="PF04055">
    <property type="entry name" value="Radical_SAM"/>
    <property type="match status" value="1"/>
</dbReference>
<dbReference type="Pfam" id="PF00919">
    <property type="entry name" value="UPF0004"/>
    <property type="match status" value="1"/>
</dbReference>
<dbReference type="SFLD" id="SFLDF00273">
    <property type="entry name" value="(dimethylallyl)adenosine_tRNA"/>
    <property type="match status" value="1"/>
</dbReference>
<dbReference type="SFLD" id="SFLDG01082">
    <property type="entry name" value="B12-binding_domain_containing"/>
    <property type="match status" value="1"/>
</dbReference>
<dbReference type="SFLD" id="SFLDG01061">
    <property type="entry name" value="methylthiotransferase"/>
    <property type="match status" value="1"/>
</dbReference>
<dbReference type="SMART" id="SM00729">
    <property type="entry name" value="Elp3"/>
    <property type="match status" value="1"/>
</dbReference>
<dbReference type="SUPFAM" id="SSF102114">
    <property type="entry name" value="Radical SAM enzymes"/>
    <property type="match status" value="1"/>
</dbReference>
<dbReference type="PROSITE" id="PS51449">
    <property type="entry name" value="MTTASE_N"/>
    <property type="match status" value="1"/>
</dbReference>
<dbReference type="PROSITE" id="PS01278">
    <property type="entry name" value="MTTASE_RADICAL"/>
    <property type="match status" value="1"/>
</dbReference>
<dbReference type="PROSITE" id="PS51918">
    <property type="entry name" value="RADICAL_SAM"/>
    <property type="match status" value="1"/>
</dbReference>
<dbReference type="PROSITE" id="PS50926">
    <property type="entry name" value="TRAM"/>
    <property type="match status" value="1"/>
</dbReference>